<evidence type="ECO:0000255" key="1">
    <source>
        <dbReference type="HAMAP-Rule" id="MF_00482"/>
    </source>
</evidence>
<geneLocation type="chloroplast"/>
<gene>
    <name evidence="1" type="primary">psaB</name>
</gene>
<sequence length="734" mass="82170">MASRFPKFSQGLSQDPTTRRIWFGIATAHDFESHDDMTEERLYQKIFASHFGQLAVIFLWTSGNLFHVAWQGNFEAWGQDPLHVRPIAHAIWDPHFGQPAVEAYTRGGASGPVNIAYSGVYQWWYTIGLRTNQDLYTGALFLLALSALFLIAGWLHLQPKWKPGLSWFKNAESRLNHHLSGLFGVSSLAWTGHLVHVAIPESRGEHVRWDNLLTALPHPQGLGPFLSGQWSVYAQNPDSTNHLFGTSQGAGTGILTFLGGFHPQTQSLWLTDIAHHHLAIAVVFIIAGHMYRTNFGIGHSIKEILEAHTPPGGRLGRGHKGLYDTINNSLHFQLGLALAALGVITSLVAQHMYSLPAYAFIAQDFTTQAALYTHHQYIAGFIMTGAFAHGAIFFIRDYNPEQNRDNVLARMLEHKEAIISHLSWASLFLGFHTLGLYVHNDVMLAFGTPEKQILIEPVFAQWIQSTHGKALYGFDVLLSSADSPAFTAGQSLWLPGWLDAINNNSNSLFLTIGPGDFLVHHAIALGLHTTTSIPVKGALDARGSKLMPDKKEFGYSFPCDGPGRGGTCDISAWDAFYLSVFWMLNTIGWVTFYWHWKHITLWQGNVAQFDESSTYLMGWLRDYLWLNSSQLINGYNPFGMNSLSVWAWMFLFGHLVWAIGFMFLISWRGYWQELIETLAWAHERTPLANLVRWKDKPVALSIVQARLVGLAHFSVGYIFTYAAFLIASTSGKFG</sequence>
<dbReference type="EC" id="1.97.1.12" evidence="1"/>
<dbReference type="EMBL" id="DQ821119">
    <property type="protein sequence ID" value="ABG79599.1"/>
    <property type="molecule type" value="Genomic_DNA"/>
</dbReference>
<dbReference type="RefSeq" id="YP_001023700.1">
    <property type="nucleotide sequence ID" value="NC_008829.1"/>
</dbReference>
<dbReference type="SMR" id="A2T332"/>
<dbReference type="GeneID" id="4788205"/>
<dbReference type="GO" id="GO:0009535">
    <property type="term" value="C:chloroplast thylakoid membrane"/>
    <property type="evidence" value="ECO:0007669"/>
    <property type="project" value="UniProtKB-SubCell"/>
</dbReference>
<dbReference type="GO" id="GO:0009522">
    <property type="term" value="C:photosystem I"/>
    <property type="evidence" value="ECO:0007669"/>
    <property type="project" value="UniProtKB-KW"/>
</dbReference>
<dbReference type="GO" id="GO:0051539">
    <property type="term" value="F:4 iron, 4 sulfur cluster binding"/>
    <property type="evidence" value="ECO:0007669"/>
    <property type="project" value="UniProtKB-KW"/>
</dbReference>
<dbReference type="GO" id="GO:0016168">
    <property type="term" value="F:chlorophyll binding"/>
    <property type="evidence" value="ECO:0007669"/>
    <property type="project" value="UniProtKB-KW"/>
</dbReference>
<dbReference type="GO" id="GO:0009055">
    <property type="term" value="F:electron transfer activity"/>
    <property type="evidence" value="ECO:0007669"/>
    <property type="project" value="UniProtKB-UniRule"/>
</dbReference>
<dbReference type="GO" id="GO:0000287">
    <property type="term" value="F:magnesium ion binding"/>
    <property type="evidence" value="ECO:0007669"/>
    <property type="project" value="UniProtKB-UniRule"/>
</dbReference>
<dbReference type="GO" id="GO:0016491">
    <property type="term" value="F:oxidoreductase activity"/>
    <property type="evidence" value="ECO:0007669"/>
    <property type="project" value="UniProtKB-KW"/>
</dbReference>
<dbReference type="GO" id="GO:0015979">
    <property type="term" value="P:photosynthesis"/>
    <property type="evidence" value="ECO:0007669"/>
    <property type="project" value="UniProtKB-UniRule"/>
</dbReference>
<dbReference type="FunFam" id="1.20.1130.10:FF:000001">
    <property type="entry name" value="Photosystem I P700 chlorophyll a apoprotein A2"/>
    <property type="match status" value="1"/>
</dbReference>
<dbReference type="Gene3D" id="1.20.1130.10">
    <property type="entry name" value="Photosystem I PsaA/PsaB"/>
    <property type="match status" value="1"/>
</dbReference>
<dbReference type="HAMAP" id="MF_00482">
    <property type="entry name" value="PSI_PsaB"/>
    <property type="match status" value="1"/>
</dbReference>
<dbReference type="InterPro" id="IPR001280">
    <property type="entry name" value="PSI_PsaA/B"/>
</dbReference>
<dbReference type="InterPro" id="IPR020586">
    <property type="entry name" value="PSI_PsaA/B_CS"/>
</dbReference>
<dbReference type="InterPro" id="IPR036408">
    <property type="entry name" value="PSI_PsaA/B_sf"/>
</dbReference>
<dbReference type="InterPro" id="IPR006244">
    <property type="entry name" value="PSI_PsaB"/>
</dbReference>
<dbReference type="NCBIfam" id="TIGR01336">
    <property type="entry name" value="psaB"/>
    <property type="match status" value="1"/>
</dbReference>
<dbReference type="PANTHER" id="PTHR30128">
    <property type="entry name" value="OUTER MEMBRANE PROTEIN, OMPA-RELATED"/>
    <property type="match status" value="1"/>
</dbReference>
<dbReference type="PANTHER" id="PTHR30128:SF19">
    <property type="entry name" value="PHOTOSYSTEM I P700 CHLOROPHYLL A APOPROTEIN A1-RELATED"/>
    <property type="match status" value="1"/>
</dbReference>
<dbReference type="Pfam" id="PF00223">
    <property type="entry name" value="PsaA_PsaB"/>
    <property type="match status" value="1"/>
</dbReference>
<dbReference type="PIRSF" id="PIRSF002905">
    <property type="entry name" value="PSI_A"/>
    <property type="match status" value="1"/>
</dbReference>
<dbReference type="PRINTS" id="PR00257">
    <property type="entry name" value="PHOTSYSPSAAB"/>
</dbReference>
<dbReference type="SUPFAM" id="SSF81558">
    <property type="entry name" value="Photosystem I subunits PsaA/PsaB"/>
    <property type="match status" value="1"/>
</dbReference>
<dbReference type="PROSITE" id="PS00419">
    <property type="entry name" value="PHOTOSYSTEM_I_PSAAB"/>
    <property type="match status" value="1"/>
</dbReference>
<name>PSAB_ANGEV</name>
<comment type="function">
    <text evidence="1">PsaA and PsaB bind P700, the primary electron donor of photosystem I (PSI), as well as the electron acceptors A0, A1 and FX. PSI is a plastocyanin-ferredoxin oxidoreductase, converting photonic excitation into a charge separation, which transfers an electron from the donor P700 chlorophyll pair to the spectroscopically characterized acceptors A0, A1, FX, FA and FB in turn. Oxidized P700 is reduced on the lumenal side of the thylakoid membrane by plastocyanin.</text>
</comment>
<comment type="catalytic activity">
    <reaction evidence="1">
        <text>reduced [plastocyanin] + hnu + oxidized [2Fe-2S]-[ferredoxin] = oxidized [plastocyanin] + reduced [2Fe-2S]-[ferredoxin]</text>
        <dbReference type="Rhea" id="RHEA:30407"/>
        <dbReference type="Rhea" id="RHEA-COMP:10000"/>
        <dbReference type="Rhea" id="RHEA-COMP:10001"/>
        <dbReference type="Rhea" id="RHEA-COMP:10039"/>
        <dbReference type="Rhea" id="RHEA-COMP:10040"/>
        <dbReference type="ChEBI" id="CHEBI:29036"/>
        <dbReference type="ChEBI" id="CHEBI:30212"/>
        <dbReference type="ChEBI" id="CHEBI:33737"/>
        <dbReference type="ChEBI" id="CHEBI:33738"/>
        <dbReference type="ChEBI" id="CHEBI:49552"/>
        <dbReference type="EC" id="1.97.1.12"/>
    </reaction>
</comment>
<comment type="cofactor">
    <text evidence="1">P700 is a chlorophyll a/chlorophyll a' dimer, A0 is one or more chlorophyll a, A1 is one or both phylloquinones and FX is a shared 4Fe-4S iron-sulfur center.</text>
</comment>
<comment type="subunit">
    <text evidence="1">The PsaA/B heterodimer binds the P700 chlorophyll special pair and subsequent electron acceptors. PSI consists of a core antenna complex that captures photons, and an electron transfer chain that converts photonic excitation into a charge separation. The eukaryotic PSI reaction center is composed of at least 11 subunits.</text>
</comment>
<comment type="subcellular location">
    <subcellularLocation>
        <location evidence="1">Plastid</location>
        <location evidence="1">Chloroplast thylakoid membrane</location>
        <topology evidence="1">Multi-pass membrane protein</topology>
    </subcellularLocation>
</comment>
<comment type="similarity">
    <text evidence="1">Belongs to the PsaA/PsaB family.</text>
</comment>
<protein>
    <recommendedName>
        <fullName evidence="1">Photosystem I P700 chlorophyll a apoprotein A2</fullName>
        <ecNumber evidence="1">1.97.1.12</ecNumber>
    </recommendedName>
    <alternativeName>
        <fullName evidence="1">PSI-B</fullName>
    </alternativeName>
    <alternativeName>
        <fullName evidence="1">PsaB</fullName>
    </alternativeName>
</protein>
<reference key="1">
    <citation type="journal article" date="2007" name="Am. Fern J.">
        <title>The complete plastid genome sequence of Angiopteris evecta (G. Forst.) Hoffm. (Marattiaceae).</title>
        <authorList>
            <person name="Roper J.M."/>
            <person name="Hansen S.K."/>
            <person name="Wolf P.G."/>
            <person name="Karol K.G."/>
            <person name="Mandoli D.F."/>
            <person name="Everett K.D.E."/>
            <person name="Kuehl J.V."/>
            <person name="Boore J.L."/>
        </authorList>
    </citation>
    <scope>NUCLEOTIDE SEQUENCE [LARGE SCALE GENOMIC DNA]</scope>
</reference>
<feature type="chain" id="PRO_0000300033" description="Photosystem I P700 chlorophyll a apoprotein A2">
    <location>
        <begin position="1"/>
        <end position="734"/>
    </location>
</feature>
<feature type="transmembrane region" description="Helical; Name=I" evidence="1">
    <location>
        <begin position="46"/>
        <end position="69"/>
    </location>
</feature>
<feature type="transmembrane region" description="Helical; Name=II" evidence="1">
    <location>
        <begin position="135"/>
        <end position="158"/>
    </location>
</feature>
<feature type="transmembrane region" description="Helical; Name=III" evidence="1">
    <location>
        <begin position="175"/>
        <end position="199"/>
    </location>
</feature>
<feature type="transmembrane region" description="Helical; Name=IV" evidence="1">
    <location>
        <begin position="273"/>
        <end position="291"/>
    </location>
</feature>
<feature type="transmembrane region" description="Helical; Name=V" evidence="1">
    <location>
        <begin position="330"/>
        <end position="353"/>
    </location>
</feature>
<feature type="transmembrane region" description="Helical; Name=VI" evidence="1">
    <location>
        <begin position="369"/>
        <end position="395"/>
    </location>
</feature>
<feature type="transmembrane region" description="Helical; Name=VII" evidence="1">
    <location>
        <begin position="417"/>
        <end position="439"/>
    </location>
</feature>
<feature type="transmembrane region" description="Helical; Name=VIII" evidence="1">
    <location>
        <begin position="517"/>
        <end position="535"/>
    </location>
</feature>
<feature type="transmembrane region" description="Helical; Name=IX" evidence="1">
    <location>
        <begin position="575"/>
        <end position="596"/>
    </location>
</feature>
<feature type="transmembrane region" description="Helical; Name=X" evidence="1">
    <location>
        <begin position="643"/>
        <end position="665"/>
    </location>
</feature>
<feature type="transmembrane region" description="Helical; Name=XI" evidence="1">
    <location>
        <begin position="707"/>
        <end position="727"/>
    </location>
</feature>
<feature type="binding site" evidence="1">
    <location>
        <position position="559"/>
    </location>
    <ligand>
        <name>[4Fe-4S] cluster</name>
        <dbReference type="ChEBI" id="CHEBI:49883"/>
        <note>ligand shared between dimeric partners</note>
    </ligand>
</feature>
<feature type="binding site" evidence="1">
    <location>
        <position position="568"/>
    </location>
    <ligand>
        <name>[4Fe-4S] cluster</name>
        <dbReference type="ChEBI" id="CHEBI:49883"/>
        <note>ligand shared between dimeric partners</note>
    </ligand>
</feature>
<feature type="binding site" description="axial binding residue" evidence="1">
    <location>
        <position position="654"/>
    </location>
    <ligand>
        <name>chlorophyll a</name>
        <dbReference type="ChEBI" id="CHEBI:58416"/>
        <label>B1</label>
    </ligand>
    <ligandPart>
        <name>Mg</name>
        <dbReference type="ChEBI" id="CHEBI:25107"/>
    </ligandPart>
</feature>
<feature type="binding site" description="axial binding residue" evidence="1">
    <location>
        <position position="662"/>
    </location>
    <ligand>
        <name>chlorophyll a</name>
        <dbReference type="ChEBI" id="CHEBI:58416"/>
        <label>B3</label>
    </ligand>
    <ligandPart>
        <name>Mg</name>
        <dbReference type="ChEBI" id="CHEBI:25107"/>
    </ligandPart>
</feature>
<feature type="binding site" evidence="1">
    <location>
        <position position="670"/>
    </location>
    <ligand>
        <name>chlorophyll a</name>
        <dbReference type="ChEBI" id="CHEBI:58416"/>
        <label>B3</label>
    </ligand>
</feature>
<feature type="binding site" evidence="1">
    <location>
        <position position="671"/>
    </location>
    <ligand>
        <name>phylloquinone</name>
        <dbReference type="ChEBI" id="CHEBI:18067"/>
        <label>B</label>
    </ligand>
</feature>
<keyword id="KW-0004">4Fe-4S</keyword>
<keyword id="KW-0148">Chlorophyll</keyword>
<keyword id="KW-0150">Chloroplast</keyword>
<keyword id="KW-0157">Chromophore</keyword>
<keyword id="KW-0249">Electron transport</keyword>
<keyword id="KW-0408">Iron</keyword>
<keyword id="KW-0411">Iron-sulfur</keyword>
<keyword id="KW-0460">Magnesium</keyword>
<keyword id="KW-0472">Membrane</keyword>
<keyword id="KW-0479">Metal-binding</keyword>
<keyword id="KW-0560">Oxidoreductase</keyword>
<keyword id="KW-0602">Photosynthesis</keyword>
<keyword id="KW-0603">Photosystem I</keyword>
<keyword id="KW-0934">Plastid</keyword>
<keyword id="KW-0793">Thylakoid</keyword>
<keyword id="KW-0812">Transmembrane</keyword>
<keyword id="KW-1133">Transmembrane helix</keyword>
<keyword id="KW-0813">Transport</keyword>
<organism>
    <name type="scientific">Angiopteris evecta</name>
    <name type="common">Mule's foot fern</name>
    <name type="synonym">Polypodium evectum</name>
    <dbReference type="NCBI Taxonomy" id="13825"/>
    <lineage>
        <taxon>Eukaryota</taxon>
        <taxon>Viridiplantae</taxon>
        <taxon>Streptophyta</taxon>
        <taxon>Embryophyta</taxon>
        <taxon>Tracheophyta</taxon>
        <taxon>Polypodiopsida</taxon>
        <taxon>Marattiidae</taxon>
        <taxon>Marattiales</taxon>
        <taxon>Marattiaceae</taxon>
        <taxon>Angiopteris</taxon>
    </lineage>
</organism>
<proteinExistence type="inferred from homology"/>
<accession>A2T332</accession>